<dbReference type="EC" id="3.6.4.-"/>
<dbReference type="EMBL" id="U20361">
    <property type="protein sequence ID" value="AAA88940.1"/>
    <property type="molecule type" value="Genomic_DNA"/>
</dbReference>
<dbReference type="SMR" id="P52158"/>
<dbReference type="GO" id="GO:0005524">
    <property type="term" value="F:ATP binding"/>
    <property type="evidence" value="ECO:0007669"/>
    <property type="project" value="UniProtKB-KW"/>
</dbReference>
<dbReference type="GO" id="GO:0004386">
    <property type="term" value="F:helicase activity"/>
    <property type="evidence" value="ECO:0007669"/>
    <property type="project" value="UniProtKB-KW"/>
</dbReference>
<dbReference type="GO" id="GO:0016787">
    <property type="term" value="F:hydrolase activity"/>
    <property type="evidence" value="ECO:0007669"/>
    <property type="project" value="UniProtKB-KW"/>
</dbReference>
<dbReference type="GO" id="GO:0003723">
    <property type="term" value="F:RNA binding"/>
    <property type="evidence" value="ECO:0007669"/>
    <property type="project" value="UniProtKB-KW"/>
</dbReference>
<dbReference type="GO" id="GO:0006353">
    <property type="term" value="P:DNA-templated transcription termination"/>
    <property type="evidence" value="ECO:0007669"/>
    <property type="project" value="UniProtKB-KW"/>
</dbReference>
<dbReference type="Gene3D" id="1.10.720.10">
    <property type="match status" value="1"/>
</dbReference>
<dbReference type="InterPro" id="IPR011112">
    <property type="entry name" value="Rho-like_N"/>
</dbReference>
<dbReference type="InterPro" id="IPR036269">
    <property type="entry name" value="Rho_N_sf"/>
</dbReference>
<dbReference type="Pfam" id="PF07498">
    <property type="entry name" value="Rho_N"/>
    <property type="match status" value="1"/>
</dbReference>
<dbReference type="SMART" id="SM00959">
    <property type="entry name" value="Rho_N"/>
    <property type="match status" value="1"/>
</dbReference>
<dbReference type="SUPFAM" id="SSF68912">
    <property type="entry name" value="Rho N-terminal domain-like"/>
    <property type="match status" value="1"/>
</dbReference>
<organism>
    <name type="scientific">Acidithiobacillus ferridurans</name>
    <dbReference type="NCBI Taxonomy" id="1232575"/>
    <lineage>
        <taxon>Bacteria</taxon>
        <taxon>Pseudomonadati</taxon>
        <taxon>Pseudomonadota</taxon>
        <taxon>Acidithiobacillia</taxon>
        <taxon>Acidithiobacillales</taxon>
        <taxon>Acidithiobacillaceae</taxon>
        <taxon>Acidithiobacillus</taxon>
    </lineage>
</organism>
<protein>
    <recommendedName>
        <fullName>Transcription termination factor Rho</fullName>
        <ecNumber>3.6.4.-</ecNumber>
    </recommendedName>
    <alternativeName>
        <fullName>ATP-dependent helicase Rho</fullName>
    </alternativeName>
</protein>
<feature type="chain" id="PRO_0000188981" description="Transcription termination factor Rho">
    <location>
        <begin position="1"/>
        <end position="58" status="greater than"/>
    </location>
</feature>
<feature type="non-terminal residue">
    <location>
        <position position="58"/>
    </location>
</feature>
<reference key="1">
    <citation type="journal article" date="1995" name="Microbiology">
        <title>Molecular genetic analysis of a thioredoxin gene from Thiobacillus ferrooxidans.</title>
        <authorList>
            <person name="Powles R.E."/>
            <person name="Deane S.M."/>
            <person name="Rawlings D.E."/>
        </authorList>
    </citation>
    <scope>NUCLEOTIDE SEQUENCE [GENOMIC DNA]</scope>
    <source>
        <strain>ATCC 33020 / DSM 29468 / JCM 18981 / 11Fe</strain>
    </source>
</reference>
<name>RHO_ACIFI</name>
<comment type="function">
    <text evidence="1">Facilitates transcription termination by a mechanism that involves Rho binding to the nascent RNA, activation of Rho's RNA-dependent ATPase activity, and release of the mRNA from the DNA template.</text>
</comment>
<comment type="subunit">
    <text evidence="1">Homohexamer. The homohexamer assembles into an open ring structure (By similarity).</text>
</comment>
<comment type="similarity">
    <text evidence="2">Belongs to the Rho family.</text>
</comment>
<sequence length="58" mass="6436">MNLTDLKRKTAADLAVICQDMGLEGTARQKKQEIIFNILNARAQCDAIYGEGVLEILQ</sequence>
<proteinExistence type="inferred from homology"/>
<accession>P52158</accession>
<gene>
    <name type="primary">rho</name>
</gene>
<keyword id="KW-0067">ATP-binding</keyword>
<keyword id="KW-0347">Helicase</keyword>
<keyword id="KW-0378">Hydrolase</keyword>
<keyword id="KW-0547">Nucleotide-binding</keyword>
<keyword id="KW-0694">RNA-binding</keyword>
<keyword id="KW-0804">Transcription</keyword>
<keyword id="KW-0805">Transcription regulation</keyword>
<keyword id="KW-0806">Transcription termination</keyword>
<evidence type="ECO:0000250" key="1"/>
<evidence type="ECO:0000305" key="2"/>